<proteinExistence type="inferred from homology"/>
<organism>
    <name type="scientific">Escherichia coli (strain SMS-3-5 / SECEC)</name>
    <dbReference type="NCBI Taxonomy" id="439855"/>
    <lineage>
        <taxon>Bacteria</taxon>
        <taxon>Pseudomonadati</taxon>
        <taxon>Pseudomonadota</taxon>
        <taxon>Gammaproteobacteria</taxon>
        <taxon>Enterobacterales</taxon>
        <taxon>Enterobacteriaceae</taxon>
        <taxon>Escherichia</taxon>
    </lineage>
</organism>
<feature type="chain" id="PRO_1000117835" description="Phosphoribosylaminoimidazole-succinocarboxamide synthase">
    <location>
        <begin position="1"/>
        <end position="237"/>
    </location>
</feature>
<reference key="1">
    <citation type="journal article" date="2008" name="J. Bacteriol.">
        <title>Insights into the environmental resistance gene pool from the genome sequence of the multidrug-resistant environmental isolate Escherichia coli SMS-3-5.</title>
        <authorList>
            <person name="Fricke W.F."/>
            <person name="Wright M.S."/>
            <person name="Lindell A.H."/>
            <person name="Harkins D.M."/>
            <person name="Baker-Austin C."/>
            <person name="Ravel J."/>
            <person name="Stepanauskas R."/>
        </authorList>
    </citation>
    <scope>NUCLEOTIDE SEQUENCE [LARGE SCALE GENOMIC DNA]</scope>
    <source>
        <strain>SMS-3-5 / SECEC</strain>
    </source>
</reference>
<comment type="catalytic activity">
    <reaction evidence="1">
        <text>5-amino-1-(5-phospho-D-ribosyl)imidazole-4-carboxylate + L-aspartate + ATP = (2S)-2-[5-amino-1-(5-phospho-beta-D-ribosyl)imidazole-4-carboxamido]succinate + ADP + phosphate + 2 H(+)</text>
        <dbReference type="Rhea" id="RHEA:22628"/>
        <dbReference type="ChEBI" id="CHEBI:15378"/>
        <dbReference type="ChEBI" id="CHEBI:29991"/>
        <dbReference type="ChEBI" id="CHEBI:30616"/>
        <dbReference type="ChEBI" id="CHEBI:43474"/>
        <dbReference type="ChEBI" id="CHEBI:58443"/>
        <dbReference type="ChEBI" id="CHEBI:77657"/>
        <dbReference type="ChEBI" id="CHEBI:456216"/>
        <dbReference type="EC" id="6.3.2.6"/>
    </reaction>
</comment>
<comment type="pathway">
    <text evidence="1">Purine metabolism; IMP biosynthesis via de novo pathway; 5-amino-1-(5-phospho-D-ribosyl)imidazole-4-carboxamide from 5-amino-1-(5-phospho-D-ribosyl)imidazole-4-carboxylate: step 1/2.</text>
</comment>
<comment type="similarity">
    <text evidence="1">Belongs to the SAICAR synthetase family.</text>
</comment>
<sequence length="237" mass="26995">MQKQAELYRGKAKTVYSTENPDLLVLEFRNDTSAGDGARIEQFDRKGMVNNKFNYFIMSKLAEAGIPTQMERLLSDTECLVKKLDMVPVECVVRNRAAGSLVKRLGIEEGIELNPPLFDLFLKNDAMHDPMVNESYCETFGWVSKENLARMKELTYKANDVLKKLFDDAGLILVDFKLEFGLYKGEVVLGDEFSPDGSRLWDKETLEKMDKDRFRQSLGGLIEAYEAVARRLGVQLD</sequence>
<protein>
    <recommendedName>
        <fullName evidence="1">Phosphoribosylaminoimidazole-succinocarboxamide synthase</fullName>
        <ecNumber evidence="1">6.3.2.6</ecNumber>
    </recommendedName>
    <alternativeName>
        <fullName evidence="1">SAICAR synthetase</fullName>
    </alternativeName>
</protein>
<evidence type="ECO:0000255" key="1">
    <source>
        <dbReference type="HAMAP-Rule" id="MF_00137"/>
    </source>
</evidence>
<name>PUR7_ECOSM</name>
<dbReference type="EC" id="6.3.2.6" evidence="1"/>
<dbReference type="EMBL" id="CP000970">
    <property type="protein sequence ID" value="ACB19295.1"/>
    <property type="molecule type" value="Genomic_DNA"/>
</dbReference>
<dbReference type="RefSeq" id="WP_001295467.1">
    <property type="nucleotide sequence ID" value="NC_010498.1"/>
</dbReference>
<dbReference type="SMR" id="B1LNC6"/>
<dbReference type="GeneID" id="89517285"/>
<dbReference type="KEGG" id="ecm:EcSMS35_2623"/>
<dbReference type="HOGENOM" id="CLU_061495_2_1_6"/>
<dbReference type="UniPathway" id="UPA00074">
    <property type="reaction ID" value="UER00131"/>
</dbReference>
<dbReference type="Proteomes" id="UP000007011">
    <property type="component" value="Chromosome"/>
</dbReference>
<dbReference type="GO" id="GO:0005829">
    <property type="term" value="C:cytosol"/>
    <property type="evidence" value="ECO:0007669"/>
    <property type="project" value="TreeGrafter"/>
</dbReference>
<dbReference type="GO" id="GO:0005524">
    <property type="term" value="F:ATP binding"/>
    <property type="evidence" value="ECO:0007669"/>
    <property type="project" value="UniProtKB-KW"/>
</dbReference>
<dbReference type="GO" id="GO:0004639">
    <property type="term" value="F:phosphoribosylaminoimidazolesuccinocarboxamide synthase activity"/>
    <property type="evidence" value="ECO:0007669"/>
    <property type="project" value="UniProtKB-UniRule"/>
</dbReference>
<dbReference type="GO" id="GO:0006189">
    <property type="term" value="P:'de novo' IMP biosynthetic process"/>
    <property type="evidence" value="ECO:0007669"/>
    <property type="project" value="UniProtKB-UniRule"/>
</dbReference>
<dbReference type="GO" id="GO:0009236">
    <property type="term" value="P:cobalamin biosynthetic process"/>
    <property type="evidence" value="ECO:0007669"/>
    <property type="project" value="InterPro"/>
</dbReference>
<dbReference type="CDD" id="cd01415">
    <property type="entry name" value="SAICAR_synt_PurC"/>
    <property type="match status" value="1"/>
</dbReference>
<dbReference type="FunFam" id="3.30.200.20:FF:000086">
    <property type="entry name" value="Phosphoribosylaminoimidazole-succinocarboxamide synthase"/>
    <property type="match status" value="1"/>
</dbReference>
<dbReference type="FunFam" id="3.30.470.20:FF:000006">
    <property type="entry name" value="Phosphoribosylaminoimidazole-succinocarboxamide synthase"/>
    <property type="match status" value="1"/>
</dbReference>
<dbReference type="Gene3D" id="3.30.470.20">
    <property type="entry name" value="ATP-grasp fold, B domain"/>
    <property type="match status" value="1"/>
</dbReference>
<dbReference type="Gene3D" id="3.30.200.20">
    <property type="entry name" value="Phosphorylase Kinase, domain 1"/>
    <property type="match status" value="1"/>
</dbReference>
<dbReference type="HAMAP" id="MF_00137">
    <property type="entry name" value="SAICAR_synth"/>
    <property type="match status" value="1"/>
</dbReference>
<dbReference type="InterPro" id="IPR028923">
    <property type="entry name" value="SAICAR_synt/ADE2_N"/>
</dbReference>
<dbReference type="InterPro" id="IPR033934">
    <property type="entry name" value="SAICAR_synt_PurC"/>
</dbReference>
<dbReference type="InterPro" id="IPR001636">
    <property type="entry name" value="SAICAR_synth"/>
</dbReference>
<dbReference type="InterPro" id="IPR050089">
    <property type="entry name" value="SAICAR_synthetase"/>
</dbReference>
<dbReference type="InterPro" id="IPR018236">
    <property type="entry name" value="SAICAR_synthetase_CS"/>
</dbReference>
<dbReference type="NCBIfam" id="TIGR00081">
    <property type="entry name" value="purC"/>
    <property type="match status" value="1"/>
</dbReference>
<dbReference type="PANTHER" id="PTHR43599">
    <property type="entry name" value="MULTIFUNCTIONAL PROTEIN ADE2"/>
    <property type="match status" value="1"/>
</dbReference>
<dbReference type="PANTHER" id="PTHR43599:SF3">
    <property type="entry name" value="SI:DKEY-6E2.2"/>
    <property type="match status" value="1"/>
</dbReference>
<dbReference type="Pfam" id="PF01259">
    <property type="entry name" value="SAICAR_synt"/>
    <property type="match status" value="1"/>
</dbReference>
<dbReference type="SUPFAM" id="SSF56104">
    <property type="entry name" value="SAICAR synthase-like"/>
    <property type="match status" value="1"/>
</dbReference>
<dbReference type="PROSITE" id="PS01057">
    <property type="entry name" value="SAICAR_SYNTHETASE_1"/>
    <property type="match status" value="1"/>
</dbReference>
<dbReference type="PROSITE" id="PS01058">
    <property type="entry name" value="SAICAR_SYNTHETASE_2"/>
    <property type="match status" value="1"/>
</dbReference>
<accession>B1LNC6</accession>
<gene>
    <name evidence="1" type="primary">purC</name>
    <name type="ordered locus">EcSMS35_2623</name>
</gene>
<keyword id="KW-0067">ATP-binding</keyword>
<keyword id="KW-0436">Ligase</keyword>
<keyword id="KW-0547">Nucleotide-binding</keyword>
<keyword id="KW-0658">Purine biosynthesis</keyword>